<feature type="chain" id="PRO_0000224763" description="Elongation factor 4">
    <location>
        <begin position="1"/>
        <end position="609"/>
    </location>
</feature>
<feature type="domain" description="tr-type G">
    <location>
        <begin position="11"/>
        <end position="193"/>
    </location>
</feature>
<feature type="binding site" evidence="1">
    <location>
        <begin position="23"/>
        <end position="28"/>
    </location>
    <ligand>
        <name>GTP</name>
        <dbReference type="ChEBI" id="CHEBI:37565"/>
    </ligand>
</feature>
<feature type="binding site" evidence="1">
    <location>
        <begin position="140"/>
        <end position="143"/>
    </location>
    <ligand>
        <name>GTP</name>
        <dbReference type="ChEBI" id="CHEBI:37565"/>
    </ligand>
</feature>
<organism>
    <name type="scientific">Geobacillus kaustophilus (strain HTA426)</name>
    <dbReference type="NCBI Taxonomy" id="235909"/>
    <lineage>
        <taxon>Bacteria</taxon>
        <taxon>Bacillati</taxon>
        <taxon>Bacillota</taxon>
        <taxon>Bacilli</taxon>
        <taxon>Bacillales</taxon>
        <taxon>Anoxybacillaceae</taxon>
        <taxon>Geobacillus</taxon>
        <taxon>Geobacillus thermoleovorans group</taxon>
    </lineage>
</organism>
<gene>
    <name evidence="1" type="primary">lepA</name>
    <name type="ordered locus">GK2508</name>
</gene>
<evidence type="ECO:0000255" key="1">
    <source>
        <dbReference type="HAMAP-Rule" id="MF_00071"/>
    </source>
</evidence>
<protein>
    <recommendedName>
        <fullName evidence="1">Elongation factor 4</fullName>
        <shortName evidence="1">EF-4</shortName>
        <ecNumber evidence="1">3.6.5.n1</ecNumber>
    </recommendedName>
    <alternativeName>
        <fullName evidence="1">Ribosomal back-translocase LepA</fullName>
    </alternativeName>
</protein>
<proteinExistence type="inferred from homology"/>
<accession>Q5KWZ3</accession>
<comment type="function">
    <text evidence="1">Required for accurate and efficient protein synthesis under certain stress conditions. May act as a fidelity factor of the translation reaction, by catalyzing a one-codon backward translocation of tRNAs on improperly translocated ribosomes. Back-translocation proceeds from a post-translocation (POST) complex to a pre-translocation (PRE) complex, thus giving elongation factor G a second chance to translocate the tRNAs correctly. Binds to ribosomes in a GTP-dependent manner.</text>
</comment>
<comment type="catalytic activity">
    <reaction evidence="1">
        <text>GTP + H2O = GDP + phosphate + H(+)</text>
        <dbReference type="Rhea" id="RHEA:19669"/>
        <dbReference type="ChEBI" id="CHEBI:15377"/>
        <dbReference type="ChEBI" id="CHEBI:15378"/>
        <dbReference type="ChEBI" id="CHEBI:37565"/>
        <dbReference type="ChEBI" id="CHEBI:43474"/>
        <dbReference type="ChEBI" id="CHEBI:58189"/>
        <dbReference type="EC" id="3.6.5.n1"/>
    </reaction>
</comment>
<comment type="subcellular location">
    <subcellularLocation>
        <location evidence="1">Cell membrane</location>
        <topology evidence="1">Peripheral membrane protein</topology>
        <orientation evidence="1">Cytoplasmic side</orientation>
    </subcellularLocation>
</comment>
<comment type="similarity">
    <text evidence="1">Belongs to the TRAFAC class translation factor GTPase superfamily. Classic translation factor GTPase family. LepA subfamily.</text>
</comment>
<dbReference type="EC" id="3.6.5.n1" evidence="1"/>
<dbReference type="EMBL" id="BA000043">
    <property type="protein sequence ID" value="BAD76793.1"/>
    <property type="molecule type" value="Genomic_DNA"/>
</dbReference>
<dbReference type="RefSeq" id="WP_011231987.1">
    <property type="nucleotide sequence ID" value="NC_006510.1"/>
</dbReference>
<dbReference type="SMR" id="Q5KWZ3"/>
<dbReference type="STRING" id="235909.GK2508"/>
<dbReference type="GeneID" id="32064389"/>
<dbReference type="KEGG" id="gka:GK2508"/>
<dbReference type="eggNOG" id="COG0481">
    <property type="taxonomic scope" value="Bacteria"/>
</dbReference>
<dbReference type="HOGENOM" id="CLU_009995_3_3_9"/>
<dbReference type="Proteomes" id="UP000001172">
    <property type="component" value="Chromosome"/>
</dbReference>
<dbReference type="GO" id="GO:0005886">
    <property type="term" value="C:plasma membrane"/>
    <property type="evidence" value="ECO:0007669"/>
    <property type="project" value="UniProtKB-SubCell"/>
</dbReference>
<dbReference type="GO" id="GO:0005525">
    <property type="term" value="F:GTP binding"/>
    <property type="evidence" value="ECO:0007669"/>
    <property type="project" value="UniProtKB-UniRule"/>
</dbReference>
<dbReference type="GO" id="GO:0003924">
    <property type="term" value="F:GTPase activity"/>
    <property type="evidence" value="ECO:0007669"/>
    <property type="project" value="UniProtKB-UniRule"/>
</dbReference>
<dbReference type="GO" id="GO:0043022">
    <property type="term" value="F:ribosome binding"/>
    <property type="evidence" value="ECO:0007669"/>
    <property type="project" value="UniProtKB-UniRule"/>
</dbReference>
<dbReference type="GO" id="GO:0003746">
    <property type="term" value="F:translation elongation factor activity"/>
    <property type="evidence" value="ECO:0007669"/>
    <property type="project" value="UniProtKB-UniRule"/>
</dbReference>
<dbReference type="GO" id="GO:0045727">
    <property type="term" value="P:positive regulation of translation"/>
    <property type="evidence" value="ECO:0007669"/>
    <property type="project" value="UniProtKB-UniRule"/>
</dbReference>
<dbReference type="CDD" id="cd03699">
    <property type="entry name" value="EF4_II"/>
    <property type="match status" value="1"/>
</dbReference>
<dbReference type="CDD" id="cd16260">
    <property type="entry name" value="EF4_III"/>
    <property type="match status" value="1"/>
</dbReference>
<dbReference type="CDD" id="cd01890">
    <property type="entry name" value="LepA"/>
    <property type="match status" value="1"/>
</dbReference>
<dbReference type="CDD" id="cd03709">
    <property type="entry name" value="lepA_C"/>
    <property type="match status" value="1"/>
</dbReference>
<dbReference type="FunFam" id="3.40.50.300:FF:000078">
    <property type="entry name" value="Elongation factor 4"/>
    <property type="match status" value="1"/>
</dbReference>
<dbReference type="FunFam" id="2.40.30.10:FF:000015">
    <property type="entry name" value="Translation factor GUF1, mitochondrial"/>
    <property type="match status" value="1"/>
</dbReference>
<dbReference type="FunFam" id="3.30.70.240:FF:000007">
    <property type="entry name" value="Translation factor GUF1, mitochondrial"/>
    <property type="match status" value="1"/>
</dbReference>
<dbReference type="FunFam" id="3.30.70.2570:FF:000001">
    <property type="entry name" value="Translation factor GUF1, mitochondrial"/>
    <property type="match status" value="1"/>
</dbReference>
<dbReference type="FunFam" id="3.30.70.870:FF:000004">
    <property type="entry name" value="Translation factor GUF1, mitochondrial"/>
    <property type="match status" value="1"/>
</dbReference>
<dbReference type="Gene3D" id="3.30.70.240">
    <property type="match status" value="1"/>
</dbReference>
<dbReference type="Gene3D" id="3.30.70.2570">
    <property type="entry name" value="Elongation factor 4, C-terminal domain"/>
    <property type="match status" value="1"/>
</dbReference>
<dbReference type="Gene3D" id="3.30.70.870">
    <property type="entry name" value="Elongation Factor G (Translational Gtpase), domain 3"/>
    <property type="match status" value="1"/>
</dbReference>
<dbReference type="Gene3D" id="3.40.50.300">
    <property type="entry name" value="P-loop containing nucleotide triphosphate hydrolases"/>
    <property type="match status" value="1"/>
</dbReference>
<dbReference type="Gene3D" id="2.40.30.10">
    <property type="entry name" value="Translation factors"/>
    <property type="match status" value="1"/>
</dbReference>
<dbReference type="HAMAP" id="MF_00071">
    <property type="entry name" value="LepA"/>
    <property type="match status" value="1"/>
</dbReference>
<dbReference type="InterPro" id="IPR006297">
    <property type="entry name" value="EF-4"/>
</dbReference>
<dbReference type="InterPro" id="IPR035647">
    <property type="entry name" value="EFG_III/V"/>
</dbReference>
<dbReference type="InterPro" id="IPR000640">
    <property type="entry name" value="EFG_V-like"/>
</dbReference>
<dbReference type="InterPro" id="IPR004161">
    <property type="entry name" value="EFTu-like_2"/>
</dbReference>
<dbReference type="InterPro" id="IPR031157">
    <property type="entry name" value="G_TR_CS"/>
</dbReference>
<dbReference type="InterPro" id="IPR038363">
    <property type="entry name" value="LepA_C_sf"/>
</dbReference>
<dbReference type="InterPro" id="IPR013842">
    <property type="entry name" value="LepA_CTD"/>
</dbReference>
<dbReference type="InterPro" id="IPR035654">
    <property type="entry name" value="LepA_IV"/>
</dbReference>
<dbReference type="InterPro" id="IPR027417">
    <property type="entry name" value="P-loop_NTPase"/>
</dbReference>
<dbReference type="InterPro" id="IPR005225">
    <property type="entry name" value="Small_GTP-bd"/>
</dbReference>
<dbReference type="InterPro" id="IPR000795">
    <property type="entry name" value="T_Tr_GTP-bd_dom"/>
</dbReference>
<dbReference type="InterPro" id="IPR009000">
    <property type="entry name" value="Transl_B-barrel_sf"/>
</dbReference>
<dbReference type="NCBIfam" id="TIGR01393">
    <property type="entry name" value="lepA"/>
    <property type="match status" value="1"/>
</dbReference>
<dbReference type="NCBIfam" id="TIGR00231">
    <property type="entry name" value="small_GTP"/>
    <property type="match status" value="1"/>
</dbReference>
<dbReference type="PANTHER" id="PTHR43512:SF4">
    <property type="entry name" value="TRANSLATION FACTOR GUF1 HOMOLOG, CHLOROPLASTIC"/>
    <property type="match status" value="1"/>
</dbReference>
<dbReference type="PANTHER" id="PTHR43512">
    <property type="entry name" value="TRANSLATION FACTOR GUF1-RELATED"/>
    <property type="match status" value="1"/>
</dbReference>
<dbReference type="Pfam" id="PF00679">
    <property type="entry name" value="EFG_C"/>
    <property type="match status" value="1"/>
</dbReference>
<dbReference type="Pfam" id="PF00009">
    <property type="entry name" value="GTP_EFTU"/>
    <property type="match status" value="1"/>
</dbReference>
<dbReference type="Pfam" id="PF03144">
    <property type="entry name" value="GTP_EFTU_D2"/>
    <property type="match status" value="1"/>
</dbReference>
<dbReference type="Pfam" id="PF06421">
    <property type="entry name" value="LepA_C"/>
    <property type="match status" value="1"/>
</dbReference>
<dbReference type="PRINTS" id="PR00315">
    <property type="entry name" value="ELONGATNFCT"/>
</dbReference>
<dbReference type="SMART" id="SM00838">
    <property type="entry name" value="EFG_C"/>
    <property type="match status" value="1"/>
</dbReference>
<dbReference type="SUPFAM" id="SSF54980">
    <property type="entry name" value="EF-G C-terminal domain-like"/>
    <property type="match status" value="2"/>
</dbReference>
<dbReference type="SUPFAM" id="SSF52540">
    <property type="entry name" value="P-loop containing nucleoside triphosphate hydrolases"/>
    <property type="match status" value="1"/>
</dbReference>
<dbReference type="SUPFAM" id="SSF50447">
    <property type="entry name" value="Translation proteins"/>
    <property type="match status" value="1"/>
</dbReference>
<dbReference type="PROSITE" id="PS00301">
    <property type="entry name" value="G_TR_1"/>
    <property type="match status" value="1"/>
</dbReference>
<dbReference type="PROSITE" id="PS51722">
    <property type="entry name" value="G_TR_2"/>
    <property type="match status" value="1"/>
</dbReference>
<name>LEPA_GEOKA</name>
<reference key="1">
    <citation type="journal article" date="2004" name="Nucleic Acids Res.">
        <title>Thermoadaptation trait revealed by the genome sequence of thermophilic Geobacillus kaustophilus.</title>
        <authorList>
            <person name="Takami H."/>
            <person name="Takaki Y."/>
            <person name="Chee G.-J."/>
            <person name="Nishi S."/>
            <person name="Shimamura S."/>
            <person name="Suzuki H."/>
            <person name="Matsui S."/>
            <person name="Uchiyama I."/>
        </authorList>
    </citation>
    <scope>NUCLEOTIDE SEQUENCE [LARGE SCALE GENOMIC DNA]</scope>
    <source>
        <strain>HTA426</strain>
    </source>
</reference>
<keyword id="KW-1003">Cell membrane</keyword>
<keyword id="KW-0342">GTP-binding</keyword>
<keyword id="KW-0378">Hydrolase</keyword>
<keyword id="KW-0472">Membrane</keyword>
<keyword id="KW-0547">Nucleotide-binding</keyword>
<keyword id="KW-0648">Protein biosynthesis</keyword>
<keyword id="KW-1185">Reference proteome</keyword>
<sequence>MNREERLKRQERIRNFSIIAHIDHGKSTLADRILEKTGALSERELREQTLDTMELERERGITIKLNAVQLTYKAKNGEEYIFHLIDTPGHVDFTYEVSRSLAACEGAILVVDAAQGIEAQTLANVYLAIDNNLEILPVINKIDLPSAEPERVRQEIEDVIGLDASDAVLASAKVGIGIEEILEKIVEKIPAPSGDPDAPLKALIFDSLYDPYRGVVAYVRVVDGTVKPGQRIKMMSTGKEFEVTEVGVFTPKQKVVDELTVGDVGYLTASIKNVKDTRVGDTITDAERPAAEPLPGYRKLNPMVFCGMYPIDTARYNDLREALEKLQLNDAALHFEPETSQALGFGFRCGFLGLLHMEIIQERLEREFHIDLITTAPSVVYKVHLTDGTEVDVDNPTNMPDPQKIDRIEEPYVKATIMVPNDYVGPVMELCQGKRGTFVDMQYLDEKRVMLIYDIPLSEIVYDFFDALKSNTKGYASFDYELIGYRPSNLVKMDILLNGEKIDALSFIVHRDSAYERGKAIVEKLKDLIPRQQFEVPVQAAIGNKVIARSTIKALRKNVLAKCYGGDVSRKRKLLEKQKEGKKRMKQIGSVEVPQEAFMAVLKIDDQKK</sequence>